<evidence type="ECO:0000255" key="1">
    <source>
        <dbReference type="HAMAP-Rule" id="MF_01224"/>
    </source>
</evidence>
<dbReference type="EC" id="4.6.1.17" evidence="1"/>
<dbReference type="EMBL" id="AE017285">
    <property type="protein sequence ID" value="AAS94772.1"/>
    <property type="molecule type" value="Genomic_DNA"/>
</dbReference>
<dbReference type="RefSeq" id="WP_223295154.1">
    <property type="nucleotide sequence ID" value="NC_002937.3"/>
</dbReference>
<dbReference type="SMR" id="Q72FC5"/>
<dbReference type="STRING" id="882.DVU_0289"/>
<dbReference type="PaxDb" id="882-DVU_0289"/>
<dbReference type="EnsemblBacteria" id="AAS94772">
    <property type="protein sequence ID" value="AAS94772"/>
    <property type="gene ID" value="DVU_0289"/>
</dbReference>
<dbReference type="KEGG" id="dvu:DVU_0289"/>
<dbReference type="eggNOG" id="COG0315">
    <property type="taxonomic scope" value="Bacteria"/>
</dbReference>
<dbReference type="HOGENOM" id="CLU_074693_1_1_7"/>
<dbReference type="PhylomeDB" id="Q72FC5"/>
<dbReference type="UniPathway" id="UPA00344"/>
<dbReference type="Proteomes" id="UP000002194">
    <property type="component" value="Chromosome"/>
</dbReference>
<dbReference type="GO" id="GO:0061799">
    <property type="term" value="F:cyclic pyranopterin monophosphate synthase activity"/>
    <property type="evidence" value="ECO:0007669"/>
    <property type="project" value="UniProtKB-UniRule"/>
</dbReference>
<dbReference type="GO" id="GO:0006777">
    <property type="term" value="P:Mo-molybdopterin cofactor biosynthetic process"/>
    <property type="evidence" value="ECO:0007669"/>
    <property type="project" value="UniProtKB-UniRule"/>
</dbReference>
<dbReference type="CDD" id="cd01420">
    <property type="entry name" value="MoaC_PE"/>
    <property type="match status" value="1"/>
</dbReference>
<dbReference type="Gene3D" id="3.30.70.640">
    <property type="entry name" value="Molybdopterin cofactor biosynthesis C (MoaC) domain"/>
    <property type="match status" value="1"/>
</dbReference>
<dbReference type="HAMAP" id="MF_01224_B">
    <property type="entry name" value="MoaC_B"/>
    <property type="match status" value="1"/>
</dbReference>
<dbReference type="InterPro" id="IPR023045">
    <property type="entry name" value="MoaC"/>
</dbReference>
<dbReference type="InterPro" id="IPR047594">
    <property type="entry name" value="MoaC_bact/euk"/>
</dbReference>
<dbReference type="InterPro" id="IPR036522">
    <property type="entry name" value="MoaC_sf"/>
</dbReference>
<dbReference type="InterPro" id="IPR050105">
    <property type="entry name" value="MoCo_biosynth_MoaA/MoaC"/>
</dbReference>
<dbReference type="InterPro" id="IPR002820">
    <property type="entry name" value="Mopterin_CF_biosynth-C_dom"/>
</dbReference>
<dbReference type="NCBIfam" id="TIGR00581">
    <property type="entry name" value="moaC"/>
    <property type="match status" value="1"/>
</dbReference>
<dbReference type="NCBIfam" id="NF006870">
    <property type="entry name" value="PRK09364.1"/>
    <property type="match status" value="1"/>
</dbReference>
<dbReference type="PANTHER" id="PTHR22960">
    <property type="entry name" value="MOLYBDOPTERIN COFACTOR SYNTHESIS PROTEIN A"/>
    <property type="match status" value="1"/>
</dbReference>
<dbReference type="Pfam" id="PF01967">
    <property type="entry name" value="MoaC"/>
    <property type="match status" value="1"/>
</dbReference>
<dbReference type="SUPFAM" id="SSF55040">
    <property type="entry name" value="Molybdenum cofactor biosynthesis protein C, MoaC"/>
    <property type="match status" value="1"/>
</dbReference>
<feature type="chain" id="PRO_1000073158" description="Cyclic pyranopterin monophosphate synthase">
    <location>
        <begin position="1"/>
        <end position="161"/>
    </location>
</feature>
<feature type="active site" evidence="1">
    <location>
        <position position="131"/>
    </location>
</feature>
<feature type="binding site" evidence="1">
    <location>
        <begin position="78"/>
        <end position="80"/>
    </location>
    <ligand>
        <name>substrate</name>
    </ligand>
</feature>
<feature type="binding site" evidence="1">
    <location>
        <begin position="116"/>
        <end position="117"/>
    </location>
    <ligand>
        <name>substrate</name>
    </ligand>
</feature>
<sequence length="161" mass="17325">MKERAAFSHMTEDGAVTMVDVGHKNPTQRTAIVRAVVEVSAATLDLLKHRALPKGDVLTTAKIAGIMAAKRTAELIPMCHPLAISYADVRFEVRDTPPSIALEAEVRTTGQTGVEMEALIAAQTAAATIYDMCKAVQKDIVIRDCRLVFKSGGKSGTFRAE</sequence>
<name>MOAC_NITV2</name>
<gene>
    <name evidence="1" type="primary">moaC</name>
    <name type="ordered locus">DVU_0289</name>
</gene>
<proteinExistence type="inferred from homology"/>
<keyword id="KW-0456">Lyase</keyword>
<keyword id="KW-0501">Molybdenum cofactor biosynthesis</keyword>
<keyword id="KW-1185">Reference proteome</keyword>
<organism>
    <name type="scientific">Nitratidesulfovibrio vulgaris (strain ATCC 29579 / DSM 644 / CCUG 34227 / NCIMB 8303 / VKM B-1760 / Hildenborough)</name>
    <name type="common">Desulfovibrio vulgaris</name>
    <dbReference type="NCBI Taxonomy" id="882"/>
    <lineage>
        <taxon>Bacteria</taxon>
        <taxon>Pseudomonadati</taxon>
        <taxon>Thermodesulfobacteriota</taxon>
        <taxon>Desulfovibrionia</taxon>
        <taxon>Desulfovibrionales</taxon>
        <taxon>Desulfovibrionaceae</taxon>
        <taxon>Nitratidesulfovibrio</taxon>
    </lineage>
</organism>
<accession>Q72FC5</accession>
<protein>
    <recommendedName>
        <fullName evidence="1">Cyclic pyranopterin monophosphate synthase</fullName>
        <ecNumber evidence="1">4.6.1.17</ecNumber>
    </recommendedName>
    <alternativeName>
        <fullName evidence="1">Molybdenum cofactor biosynthesis protein C</fullName>
    </alternativeName>
</protein>
<comment type="function">
    <text evidence="1">Catalyzes the conversion of (8S)-3',8-cyclo-7,8-dihydroguanosine 5'-triphosphate to cyclic pyranopterin monophosphate (cPMP).</text>
</comment>
<comment type="catalytic activity">
    <reaction evidence="1">
        <text>(8S)-3',8-cyclo-7,8-dihydroguanosine 5'-triphosphate = cyclic pyranopterin phosphate + diphosphate</text>
        <dbReference type="Rhea" id="RHEA:49580"/>
        <dbReference type="ChEBI" id="CHEBI:33019"/>
        <dbReference type="ChEBI" id="CHEBI:59648"/>
        <dbReference type="ChEBI" id="CHEBI:131766"/>
        <dbReference type="EC" id="4.6.1.17"/>
    </reaction>
</comment>
<comment type="pathway">
    <text evidence="1">Cofactor biosynthesis; molybdopterin biosynthesis.</text>
</comment>
<comment type="subunit">
    <text evidence="1">Homohexamer; trimer of dimers.</text>
</comment>
<comment type="similarity">
    <text evidence="1">Belongs to the MoaC family.</text>
</comment>
<reference key="1">
    <citation type="journal article" date="2004" name="Nat. Biotechnol.">
        <title>The genome sequence of the anaerobic, sulfate-reducing bacterium Desulfovibrio vulgaris Hildenborough.</title>
        <authorList>
            <person name="Heidelberg J.F."/>
            <person name="Seshadri R."/>
            <person name="Haveman S.A."/>
            <person name="Hemme C.L."/>
            <person name="Paulsen I.T."/>
            <person name="Kolonay J.F."/>
            <person name="Eisen J.A."/>
            <person name="Ward N.L."/>
            <person name="Methe B.A."/>
            <person name="Brinkac L.M."/>
            <person name="Daugherty S.C."/>
            <person name="DeBoy R.T."/>
            <person name="Dodson R.J."/>
            <person name="Durkin A.S."/>
            <person name="Madupu R."/>
            <person name="Nelson W.C."/>
            <person name="Sullivan S.A."/>
            <person name="Fouts D.E."/>
            <person name="Haft D.H."/>
            <person name="Selengut J."/>
            <person name="Peterson J.D."/>
            <person name="Davidsen T.M."/>
            <person name="Zafar N."/>
            <person name="Zhou L."/>
            <person name="Radune D."/>
            <person name="Dimitrov G."/>
            <person name="Hance M."/>
            <person name="Tran K."/>
            <person name="Khouri H.M."/>
            <person name="Gill J."/>
            <person name="Utterback T.R."/>
            <person name="Feldblyum T.V."/>
            <person name="Wall J.D."/>
            <person name="Voordouw G."/>
            <person name="Fraser C.M."/>
        </authorList>
    </citation>
    <scope>NUCLEOTIDE SEQUENCE [LARGE SCALE GENOMIC DNA]</scope>
    <source>
        <strain>ATCC 29579 / DSM 644 / CCUG 34227 / NCIMB 8303 / VKM B-1760 / Hildenborough</strain>
    </source>
</reference>